<feature type="chain" id="PRO_0000143179" description="Peptide chain release factor subunit 1">
    <location>
        <begin position="1"/>
        <end position="410"/>
    </location>
</feature>
<gene>
    <name evidence="1" type="primary">prf1</name>
    <name type="ordered locus">PTO1443</name>
</gene>
<protein>
    <recommendedName>
        <fullName evidence="1">Peptide chain release factor subunit 1</fullName>
    </recommendedName>
    <alternativeName>
        <fullName evidence="1">Translation termination factor aRF1</fullName>
    </alternativeName>
</protein>
<name>RF1_PICTO</name>
<accession>Q6KZ24</accession>
<proteinExistence type="inferred from homology"/>
<organism>
    <name type="scientific">Picrophilus torridus (strain ATCC 700027 / DSM 9790 / JCM 10055 / NBRC 100828 / KAW 2/3)</name>
    <dbReference type="NCBI Taxonomy" id="1122961"/>
    <lineage>
        <taxon>Archaea</taxon>
        <taxon>Methanobacteriati</taxon>
        <taxon>Thermoplasmatota</taxon>
        <taxon>Thermoplasmata</taxon>
        <taxon>Thermoplasmatales</taxon>
        <taxon>Picrophilaceae</taxon>
        <taxon>Picrophilus</taxon>
    </lineage>
</organism>
<reference key="1">
    <citation type="journal article" date="2004" name="Proc. Natl. Acad. Sci. U.S.A.">
        <title>Genome sequence of Picrophilus torridus and its implications for life around pH 0.</title>
        <authorList>
            <person name="Fuetterer O."/>
            <person name="Angelov A."/>
            <person name="Liesegang H."/>
            <person name="Gottschalk G."/>
            <person name="Schleper C."/>
            <person name="Schepers B."/>
            <person name="Dock C."/>
            <person name="Antranikian G."/>
            <person name="Liebl W."/>
        </authorList>
    </citation>
    <scope>NUCLEOTIDE SEQUENCE [LARGE SCALE GENOMIC DNA]</scope>
    <source>
        <strain>ATCC 700027 / DSM 9790 / JCM 10055 / NBRC 100828 / KAW 2/3</strain>
    </source>
</reference>
<comment type="function">
    <text evidence="1">Directs the termination of nascent peptide synthesis (translation) in response to the termination codons UAA, UAG and UGA.</text>
</comment>
<comment type="subunit">
    <text evidence="1">Heterodimer of two subunits, one of which binds GTP.</text>
</comment>
<comment type="subcellular location">
    <subcellularLocation>
        <location evidence="1">Cytoplasm</location>
    </subcellularLocation>
</comment>
<comment type="similarity">
    <text evidence="1">Belongs to the eukaryotic release factor 1 family.</text>
</comment>
<evidence type="ECO:0000255" key="1">
    <source>
        <dbReference type="HAMAP-Rule" id="MF_00424"/>
    </source>
</evidence>
<keyword id="KW-0963">Cytoplasm</keyword>
<keyword id="KW-0648">Protein biosynthesis</keyword>
<sequence>MESEDYKRYEFKKALEELKDLHGRGTELISLYIPPDKQISDVVQYLREEYSTSSNIKSKSTRKNVLAAIESIMSRLKYYKQPPETGLVFFVGHIATRGDQTEMYTKIIEPPEPIQTFMYKCDSNFHLEQLESQLKEKDIYGLIVIDRKEATVGFLKGTRIEVVDYEQSLVPSKHHQGGQSSRRFERLIEIAANDFFKKIGEIANNAFMPLIKDINAVFIGGPGATKEYFLEKDYLRNEIKQKVKDLFDIGYTDESGLRELVEKASESIKDMKISREKDIINRFLREIKKPEGGLGVYGEDAIINALKSKNLDLLIISDTLKKRRYTYKCPVCNDTKTFTEKPRETPLCDKDNSEMELVDEDDLVEDLYKLADEAGTNVVFVSEDSDEGRLIKTAFGGLAGIMRYVPAIAP</sequence>
<dbReference type="EMBL" id="AE017261">
    <property type="protein sequence ID" value="AAT44028.1"/>
    <property type="molecule type" value="Genomic_DNA"/>
</dbReference>
<dbReference type="RefSeq" id="WP_011178244.1">
    <property type="nucleotide sequence ID" value="NC_005877.1"/>
</dbReference>
<dbReference type="SMR" id="Q6KZ24"/>
<dbReference type="FunCoup" id="Q6KZ24">
    <property type="interactions" value="256"/>
</dbReference>
<dbReference type="STRING" id="263820.PTO1443"/>
<dbReference type="PaxDb" id="263820-PTO1443"/>
<dbReference type="GeneID" id="2844849"/>
<dbReference type="KEGG" id="pto:PTO1443"/>
<dbReference type="PATRIC" id="fig|263820.9.peg.1497"/>
<dbReference type="eggNOG" id="arCOG01742">
    <property type="taxonomic scope" value="Archaea"/>
</dbReference>
<dbReference type="HOGENOM" id="CLU_035759_3_0_2"/>
<dbReference type="InParanoid" id="Q6KZ24"/>
<dbReference type="OrthoDB" id="1011at2157"/>
<dbReference type="Proteomes" id="UP000000438">
    <property type="component" value="Chromosome"/>
</dbReference>
<dbReference type="GO" id="GO:0005737">
    <property type="term" value="C:cytoplasm"/>
    <property type="evidence" value="ECO:0007669"/>
    <property type="project" value="UniProtKB-SubCell"/>
</dbReference>
<dbReference type="GO" id="GO:0016149">
    <property type="term" value="F:translation release factor activity, codon specific"/>
    <property type="evidence" value="ECO:0007669"/>
    <property type="project" value="UniProtKB-UniRule"/>
</dbReference>
<dbReference type="FunFam" id="3.30.420.60:FF:000003">
    <property type="entry name" value="Peptide chain release factor subunit 1"/>
    <property type="match status" value="1"/>
</dbReference>
<dbReference type="FunFam" id="3.30.960.10:FF:000003">
    <property type="entry name" value="Peptide chain release factor subunit 1"/>
    <property type="match status" value="1"/>
</dbReference>
<dbReference type="Gene3D" id="1.20.5.170">
    <property type="match status" value="1"/>
</dbReference>
<dbReference type="Gene3D" id="3.30.1330.30">
    <property type="match status" value="1"/>
</dbReference>
<dbReference type="Gene3D" id="3.30.960.10">
    <property type="entry name" value="eRF1 domain 1"/>
    <property type="match status" value="1"/>
</dbReference>
<dbReference type="Gene3D" id="3.30.420.60">
    <property type="entry name" value="eRF1 domain 2"/>
    <property type="match status" value="1"/>
</dbReference>
<dbReference type="HAMAP" id="MF_00424">
    <property type="entry name" value="Rel_fact_arch_1"/>
    <property type="match status" value="1"/>
</dbReference>
<dbReference type="InterPro" id="IPR042226">
    <property type="entry name" value="eFR1_2_sf"/>
</dbReference>
<dbReference type="InterPro" id="IPR005140">
    <property type="entry name" value="eRF1_1_Pelota"/>
</dbReference>
<dbReference type="InterPro" id="IPR024049">
    <property type="entry name" value="eRF1_1_sf"/>
</dbReference>
<dbReference type="InterPro" id="IPR005141">
    <property type="entry name" value="eRF1_2"/>
</dbReference>
<dbReference type="InterPro" id="IPR005142">
    <property type="entry name" value="eRF1_3"/>
</dbReference>
<dbReference type="InterPro" id="IPR020918">
    <property type="entry name" value="Peptide_chain-rel_aRF1"/>
</dbReference>
<dbReference type="InterPro" id="IPR004403">
    <property type="entry name" value="Peptide_chain-rel_eRF1/aRF1"/>
</dbReference>
<dbReference type="InterPro" id="IPR029064">
    <property type="entry name" value="Ribosomal_eL30-like_sf"/>
</dbReference>
<dbReference type="NCBIfam" id="TIGR03676">
    <property type="entry name" value="aRF1_eRF1"/>
    <property type="match status" value="1"/>
</dbReference>
<dbReference type="PANTHER" id="PTHR10113">
    <property type="entry name" value="PEPTIDE CHAIN RELEASE FACTOR SUBUNIT 1"/>
    <property type="match status" value="1"/>
</dbReference>
<dbReference type="Pfam" id="PF03463">
    <property type="entry name" value="eRF1_1"/>
    <property type="match status" value="1"/>
</dbReference>
<dbReference type="Pfam" id="PF03464">
    <property type="entry name" value="eRF1_2"/>
    <property type="match status" value="1"/>
</dbReference>
<dbReference type="Pfam" id="PF03465">
    <property type="entry name" value="eRF1_3"/>
    <property type="match status" value="1"/>
</dbReference>
<dbReference type="SMART" id="SM01194">
    <property type="entry name" value="eRF1_1"/>
    <property type="match status" value="1"/>
</dbReference>
<dbReference type="SUPFAM" id="SSF55315">
    <property type="entry name" value="L30e-like"/>
    <property type="match status" value="1"/>
</dbReference>
<dbReference type="SUPFAM" id="SSF55481">
    <property type="entry name" value="N-terminal domain of eukaryotic peptide chain release factor subunit 1, ERF1"/>
    <property type="match status" value="1"/>
</dbReference>
<dbReference type="SUPFAM" id="SSF53137">
    <property type="entry name" value="Translational machinery components"/>
    <property type="match status" value="1"/>
</dbReference>